<accession>A6V4J2</accession>
<proteinExistence type="inferred from homology"/>
<keyword id="KW-0963">Cytoplasm</keyword>
<keyword id="KW-0227">DNA damage</keyword>
<keyword id="KW-0228">DNA excision</keyword>
<keyword id="KW-0234">DNA repair</keyword>
<keyword id="KW-0267">Excision nuclease</keyword>
<keyword id="KW-0742">SOS response</keyword>
<gene>
    <name evidence="1" type="primary">uvrC</name>
    <name type="ordered locus">PSPA7_2614</name>
</gene>
<sequence length="608" mass="67363">MTAVFDASAFLATCSNRPGVYRMFDADAKLLYVGKAKSLKKRLASYFRKSGLAPKTAALVVRIAQVETTITANETEALLLEQTLIKEWRPPYNILLRDDKSYPFVFLSSEDEYPRLSLHRGAKKRKGRYFGPYPSAGAIRESLNLLQKAFLVRQCEDSYFRNRTRPCLQYQIKRCKGPCVGLVGPEEYAEDVRHSVMFLEGRSNALADELNTGMEQAAMRLDFEKAAELRDQVAILRRVQDQQSMEGGNGDVDIVAAIVTPGGACVHLISVRGGRVLGSKNFFPQVAIEEEVGEVLLAFLGQYYLSHQERDLPAELIVNVMHEDFPVLVAAIAEARGRQLEISYRVRGTRARWQQLAVTNAEQALGARLANRQHVAARFEALAEALDLAEPPQRLECFDISHSSGEATVASCVVFGPEGPLKSDYRRYNIEGVTAGDDYAAMHQALTRRFSRLKEGEGKMPDILLVDGGKGQLAMAQEVLQELAVAGLILLGVAKGVTRKPGLETLYLNDAAHEFTLPADSPALHLIQQIRDEAHRFAITGHRARRGKARRTSTLEDVPGVGPKRRRDLLKHFGGLQELSRASIDELAKAPGISKKLAEQIYAVLHSE</sequence>
<name>UVRC_PSEP7</name>
<reference key="1">
    <citation type="submission" date="2007-06" db="EMBL/GenBank/DDBJ databases">
        <authorList>
            <person name="Dodson R.J."/>
            <person name="Harkins D."/>
            <person name="Paulsen I.T."/>
        </authorList>
    </citation>
    <scope>NUCLEOTIDE SEQUENCE [LARGE SCALE GENOMIC DNA]</scope>
    <source>
        <strain>DSM 24068 / PA7</strain>
    </source>
</reference>
<dbReference type="EMBL" id="CP000744">
    <property type="protein sequence ID" value="ABR82671.1"/>
    <property type="molecule type" value="Genomic_DNA"/>
</dbReference>
<dbReference type="RefSeq" id="WP_012075473.1">
    <property type="nucleotide sequence ID" value="NC_009656.1"/>
</dbReference>
<dbReference type="SMR" id="A6V4J2"/>
<dbReference type="KEGG" id="pap:PSPA7_2614"/>
<dbReference type="HOGENOM" id="CLU_014841_3_0_6"/>
<dbReference type="Proteomes" id="UP000001582">
    <property type="component" value="Chromosome"/>
</dbReference>
<dbReference type="GO" id="GO:0005737">
    <property type="term" value="C:cytoplasm"/>
    <property type="evidence" value="ECO:0007669"/>
    <property type="project" value="UniProtKB-SubCell"/>
</dbReference>
<dbReference type="GO" id="GO:0009380">
    <property type="term" value="C:excinuclease repair complex"/>
    <property type="evidence" value="ECO:0007669"/>
    <property type="project" value="InterPro"/>
</dbReference>
<dbReference type="GO" id="GO:0003677">
    <property type="term" value="F:DNA binding"/>
    <property type="evidence" value="ECO:0007669"/>
    <property type="project" value="UniProtKB-UniRule"/>
</dbReference>
<dbReference type="GO" id="GO:0009381">
    <property type="term" value="F:excinuclease ABC activity"/>
    <property type="evidence" value="ECO:0007669"/>
    <property type="project" value="UniProtKB-UniRule"/>
</dbReference>
<dbReference type="GO" id="GO:0006289">
    <property type="term" value="P:nucleotide-excision repair"/>
    <property type="evidence" value="ECO:0007669"/>
    <property type="project" value="UniProtKB-UniRule"/>
</dbReference>
<dbReference type="GO" id="GO:0009432">
    <property type="term" value="P:SOS response"/>
    <property type="evidence" value="ECO:0007669"/>
    <property type="project" value="UniProtKB-UniRule"/>
</dbReference>
<dbReference type="CDD" id="cd10434">
    <property type="entry name" value="GIY-YIG_UvrC_Cho"/>
    <property type="match status" value="1"/>
</dbReference>
<dbReference type="FunFam" id="1.10.150.20:FF:000005">
    <property type="entry name" value="UvrABC system protein C"/>
    <property type="match status" value="1"/>
</dbReference>
<dbReference type="FunFam" id="3.30.420.340:FF:000001">
    <property type="entry name" value="UvrABC system protein C"/>
    <property type="match status" value="1"/>
</dbReference>
<dbReference type="FunFam" id="3.40.1440.10:FF:000001">
    <property type="entry name" value="UvrABC system protein C"/>
    <property type="match status" value="1"/>
</dbReference>
<dbReference type="Gene3D" id="1.10.150.20">
    <property type="entry name" value="5' to 3' exonuclease, C-terminal subdomain"/>
    <property type="match status" value="1"/>
</dbReference>
<dbReference type="Gene3D" id="3.40.1440.10">
    <property type="entry name" value="GIY-YIG endonuclease"/>
    <property type="match status" value="1"/>
</dbReference>
<dbReference type="Gene3D" id="4.10.860.10">
    <property type="entry name" value="UVR domain"/>
    <property type="match status" value="1"/>
</dbReference>
<dbReference type="Gene3D" id="3.30.420.340">
    <property type="entry name" value="UvrC, RNAse H endonuclease domain"/>
    <property type="match status" value="1"/>
</dbReference>
<dbReference type="HAMAP" id="MF_00203">
    <property type="entry name" value="UvrC"/>
    <property type="match status" value="1"/>
</dbReference>
<dbReference type="InterPro" id="IPR000305">
    <property type="entry name" value="GIY-YIG_endonuc"/>
</dbReference>
<dbReference type="InterPro" id="IPR035901">
    <property type="entry name" value="GIY-YIG_endonuc_sf"/>
</dbReference>
<dbReference type="InterPro" id="IPR047296">
    <property type="entry name" value="GIY-YIG_UvrC_Cho"/>
</dbReference>
<dbReference type="InterPro" id="IPR003583">
    <property type="entry name" value="Hlx-hairpin-Hlx_DNA-bd_motif"/>
</dbReference>
<dbReference type="InterPro" id="IPR010994">
    <property type="entry name" value="RuvA_2-like"/>
</dbReference>
<dbReference type="InterPro" id="IPR001943">
    <property type="entry name" value="UVR_dom"/>
</dbReference>
<dbReference type="InterPro" id="IPR036876">
    <property type="entry name" value="UVR_dom_sf"/>
</dbReference>
<dbReference type="InterPro" id="IPR050066">
    <property type="entry name" value="UvrABC_protein_C"/>
</dbReference>
<dbReference type="InterPro" id="IPR004791">
    <property type="entry name" value="UvrC"/>
</dbReference>
<dbReference type="InterPro" id="IPR001162">
    <property type="entry name" value="UvrC_RNase_H_dom"/>
</dbReference>
<dbReference type="InterPro" id="IPR038476">
    <property type="entry name" value="UvrC_RNase_H_dom_sf"/>
</dbReference>
<dbReference type="NCBIfam" id="NF001824">
    <property type="entry name" value="PRK00558.1-5"/>
    <property type="match status" value="1"/>
</dbReference>
<dbReference type="NCBIfam" id="TIGR00194">
    <property type="entry name" value="uvrC"/>
    <property type="match status" value="1"/>
</dbReference>
<dbReference type="PANTHER" id="PTHR30562:SF1">
    <property type="entry name" value="UVRABC SYSTEM PROTEIN C"/>
    <property type="match status" value="1"/>
</dbReference>
<dbReference type="PANTHER" id="PTHR30562">
    <property type="entry name" value="UVRC/OXIDOREDUCTASE"/>
    <property type="match status" value="1"/>
</dbReference>
<dbReference type="Pfam" id="PF01541">
    <property type="entry name" value="GIY-YIG"/>
    <property type="match status" value="1"/>
</dbReference>
<dbReference type="Pfam" id="PF14520">
    <property type="entry name" value="HHH_5"/>
    <property type="match status" value="1"/>
</dbReference>
<dbReference type="Pfam" id="PF02151">
    <property type="entry name" value="UVR"/>
    <property type="match status" value="1"/>
</dbReference>
<dbReference type="Pfam" id="PF22920">
    <property type="entry name" value="UvrC_RNaseH"/>
    <property type="match status" value="1"/>
</dbReference>
<dbReference type="Pfam" id="PF08459">
    <property type="entry name" value="UvrC_RNaseH_dom"/>
    <property type="match status" value="1"/>
</dbReference>
<dbReference type="SMART" id="SM00465">
    <property type="entry name" value="GIYc"/>
    <property type="match status" value="1"/>
</dbReference>
<dbReference type="SMART" id="SM00278">
    <property type="entry name" value="HhH1"/>
    <property type="match status" value="2"/>
</dbReference>
<dbReference type="SUPFAM" id="SSF46600">
    <property type="entry name" value="C-terminal UvrC-binding domain of UvrB"/>
    <property type="match status" value="1"/>
</dbReference>
<dbReference type="SUPFAM" id="SSF82771">
    <property type="entry name" value="GIY-YIG endonuclease"/>
    <property type="match status" value="1"/>
</dbReference>
<dbReference type="SUPFAM" id="SSF47781">
    <property type="entry name" value="RuvA domain 2-like"/>
    <property type="match status" value="1"/>
</dbReference>
<dbReference type="PROSITE" id="PS50164">
    <property type="entry name" value="GIY_YIG"/>
    <property type="match status" value="1"/>
</dbReference>
<dbReference type="PROSITE" id="PS50151">
    <property type="entry name" value="UVR"/>
    <property type="match status" value="1"/>
</dbReference>
<dbReference type="PROSITE" id="PS50165">
    <property type="entry name" value="UVRC"/>
    <property type="match status" value="1"/>
</dbReference>
<organism>
    <name type="scientific">Pseudomonas paraeruginosa (strain DSM 24068 / PA7)</name>
    <name type="common">Pseudomonas aeruginosa (strain PA7)</name>
    <dbReference type="NCBI Taxonomy" id="381754"/>
    <lineage>
        <taxon>Bacteria</taxon>
        <taxon>Pseudomonadati</taxon>
        <taxon>Pseudomonadota</taxon>
        <taxon>Gammaproteobacteria</taxon>
        <taxon>Pseudomonadales</taxon>
        <taxon>Pseudomonadaceae</taxon>
        <taxon>Pseudomonas</taxon>
        <taxon>Pseudomonas paraeruginosa</taxon>
    </lineage>
</organism>
<feature type="chain" id="PRO_1000077818" description="UvrABC system protein C">
    <location>
        <begin position="1"/>
        <end position="608"/>
    </location>
</feature>
<feature type="domain" description="GIY-YIG" evidence="1">
    <location>
        <begin position="16"/>
        <end position="94"/>
    </location>
</feature>
<feature type="domain" description="UVR" evidence="1">
    <location>
        <begin position="204"/>
        <end position="239"/>
    </location>
</feature>
<comment type="function">
    <text evidence="1">The UvrABC repair system catalyzes the recognition and processing of DNA lesions. UvrC both incises the 5' and 3' sides of the lesion. The N-terminal half is responsible for the 3' incision and the C-terminal half is responsible for the 5' incision.</text>
</comment>
<comment type="subunit">
    <text evidence="1">Interacts with UvrB in an incision complex.</text>
</comment>
<comment type="subcellular location">
    <subcellularLocation>
        <location evidence="1">Cytoplasm</location>
    </subcellularLocation>
</comment>
<comment type="similarity">
    <text evidence="1">Belongs to the UvrC family.</text>
</comment>
<evidence type="ECO:0000255" key="1">
    <source>
        <dbReference type="HAMAP-Rule" id="MF_00203"/>
    </source>
</evidence>
<protein>
    <recommendedName>
        <fullName evidence="1">UvrABC system protein C</fullName>
        <shortName evidence="1">Protein UvrC</shortName>
    </recommendedName>
    <alternativeName>
        <fullName evidence="1">Excinuclease ABC subunit C</fullName>
    </alternativeName>
</protein>